<name>RU1C_PLABA</name>
<dbReference type="EMBL" id="CAAI01006809">
    <property type="protein sequence ID" value="CAI04780.1"/>
    <property type="molecule type" value="Genomic_DNA"/>
</dbReference>
<dbReference type="EMBL" id="LK023129">
    <property type="protein sequence ID" value="VUC58307.1"/>
    <property type="molecule type" value="Genomic_DNA"/>
</dbReference>
<dbReference type="RefSeq" id="XP_677793.1">
    <property type="nucleotide sequence ID" value="XM_672701.1"/>
</dbReference>
<dbReference type="SMR" id="Q4YBG7"/>
<dbReference type="STRING" id="5823.A0A509ASP8"/>
<dbReference type="VEuPathDB" id="PlasmoDB:PBANKA_1424800"/>
<dbReference type="eggNOG" id="ENOG502SFRZ">
    <property type="taxonomic scope" value="Eukaryota"/>
</dbReference>
<dbReference type="HOGENOM" id="CLU_106083_0_0_1"/>
<dbReference type="InParanoid" id="A0A509ASP8"/>
<dbReference type="OMA" id="SIGMHNN"/>
<dbReference type="Proteomes" id="UP000074855">
    <property type="component" value="Chromosome 14"/>
</dbReference>
<dbReference type="GO" id="GO:0000243">
    <property type="term" value="C:commitment complex"/>
    <property type="evidence" value="ECO:0007669"/>
    <property type="project" value="UniProtKB-UniRule"/>
</dbReference>
<dbReference type="GO" id="GO:0005685">
    <property type="term" value="C:U1 snRNP"/>
    <property type="evidence" value="ECO:0007669"/>
    <property type="project" value="UniProtKB-UniRule"/>
</dbReference>
<dbReference type="GO" id="GO:0071004">
    <property type="term" value="C:U2-type prespliceosome"/>
    <property type="evidence" value="ECO:0007669"/>
    <property type="project" value="UniProtKB-UniRule"/>
</dbReference>
<dbReference type="GO" id="GO:0003729">
    <property type="term" value="F:mRNA binding"/>
    <property type="evidence" value="ECO:0007669"/>
    <property type="project" value="UniProtKB-UniRule"/>
</dbReference>
<dbReference type="GO" id="GO:0030627">
    <property type="term" value="F:pre-mRNA 5'-splice site binding"/>
    <property type="evidence" value="ECO:0007669"/>
    <property type="project" value="InterPro"/>
</dbReference>
<dbReference type="GO" id="GO:0030619">
    <property type="term" value="F:U1 snRNA binding"/>
    <property type="evidence" value="ECO:0007669"/>
    <property type="project" value="UniProtKB-UniRule"/>
</dbReference>
<dbReference type="GO" id="GO:0008270">
    <property type="term" value="F:zinc ion binding"/>
    <property type="evidence" value="ECO:0007669"/>
    <property type="project" value="UniProtKB-UniRule"/>
</dbReference>
<dbReference type="GO" id="GO:0000395">
    <property type="term" value="P:mRNA 5'-splice site recognition"/>
    <property type="evidence" value="ECO:0007669"/>
    <property type="project" value="UniProtKB-UniRule"/>
</dbReference>
<dbReference type="GO" id="GO:0000387">
    <property type="term" value="P:spliceosomal snRNP assembly"/>
    <property type="evidence" value="ECO:0007669"/>
    <property type="project" value="UniProtKB-UniRule"/>
</dbReference>
<dbReference type="FunFam" id="3.30.160.60:FF:000890">
    <property type="entry name" value="U1 small nuclear ribonucleoprotein C"/>
    <property type="match status" value="1"/>
</dbReference>
<dbReference type="Gene3D" id="3.30.160.60">
    <property type="entry name" value="Classic Zinc Finger"/>
    <property type="match status" value="1"/>
</dbReference>
<dbReference type="HAMAP" id="MF_03153">
    <property type="entry name" value="U1_C"/>
    <property type="match status" value="1"/>
</dbReference>
<dbReference type="InterPro" id="IPR000690">
    <property type="entry name" value="Matrin/U1-C_Znf_C2H2"/>
</dbReference>
<dbReference type="InterPro" id="IPR003604">
    <property type="entry name" value="Matrin/U1-like-C_Znf_C2H2"/>
</dbReference>
<dbReference type="InterPro" id="IPR013085">
    <property type="entry name" value="U1-CZ_Znf_C2H2"/>
</dbReference>
<dbReference type="InterPro" id="IPR017340">
    <property type="entry name" value="U1_snRNP-C"/>
</dbReference>
<dbReference type="InterPro" id="IPR036236">
    <property type="entry name" value="Znf_C2H2_sf"/>
</dbReference>
<dbReference type="PANTHER" id="PTHR31148">
    <property type="entry name" value="U1 SMALL NUCLEAR RIBONUCLEOPROTEIN C"/>
    <property type="match status" value="1"/>
</dbReference>
<dbReference type="PANTHER" id="PTHR31148:SF1">
    <property type="entry name" value="U1 SMALL NUCLEAR RIBONUCLEOPROTEIN C"/>
    <property type="match status" value="1"/>
</dbReference>
<dbReference type="Pfam" id="PF06220">
    <property type="entry name" value="zf-U1"/>
    <property type="match status" value="1"/>
</dbReference>
<dbReference type="PIRSF" id="PIRSF037969">
    <property type="entry name" value="U1_snRNP-C"/>
    <property type="match status" value="1"/>
</dbReference>
<dbReference type="SMART" id="SM00451">
    <property type="entry name" value="ZnF_U1"/>
    <property type="match status" value="1"/>
</dbReference>
<dbReference type="SUPFAM" id="SSF57667">
    <property type="entry name" value="beta-beta-alpha zinc fingers"/>
    <property type="match status" value="1"/>
</dbReference>
<dbReference type="PROSITE" id="PS50171">
    <property type="entry name" value="ZF_MATRIN"/>
    <property type="match status" value="1"/>
</dbReference>
<keyword id="KW-0479">Metal-binding</keyword>
<keyword id="KW-0539">Nucleus</keyword>
<keyword id="KW-1185">Reference proteome</keyword>
<keyword id="KW-0687">Ribonucleoprotein</keyword>
<keyword id="KW-0694">RNA-binding</keyword>
<keyword id="KW-0862">Zinc</keyword>
<keyword id="KW-0863">Zinc-finger</keyword>
<evidence type="ECO:0000255" key="1">
    <source>
        <dbReference type="HAMAP-Rule" id="MF_03153"/>
    </source>
</evidence>
<evidence type="ECO:0000256" key="2">
    <source>
        <dbReference type="SAM" id="MobiDB-lite"/>
    </source>
</evidence>
<evidence type="ECO:0000312" key="3">
    <source>
        <dbReference type="EMBL" id="VUC58307.1"/>
    </source>
</evidence>
<evidence type="ECO:0000312" key="4">
    <source>
        <dbReference type="Proteomes" id="UP000074855"/>
    </source>
</evidence>
<accession>Q4YBG7</accession>
<accession>A0A509ASP8</accession>
<reference evidence="4" key="1">
    <citation type="journal article" date="2014" name="BMC Biol.">
        <title>A comprehensive evaluation of rodent malaria parasite genomes and gene expression.</title>
        <authorList>
            <person name="Otto T.D."/>
            <person name="Bohme U."/>
            <person name="Jackson A.P."/>
            <person name="Hunt M."/>
            <person name="Franke-Fayard B."/>
            <person name="Hoeijmakers W.A."/>
            <person name="Religa A.A."/>
            <person name="Robertson L."/>
            <person name="Sanders M."/>
            <person name="Ogun S.A."/>
            <person name="Cunningham D."/>
            <person name="Erhart A."/>
            <person name="Billker O."/>
            <person name="Khan S.M."/>
            <person name="Stunnenberg H.G."/>
            <person name="Langhorne J."/>
            <person name="Holder A.A."/>
            <person name="Waters A.P."/>
            <person name="Newbold C.I."/>
            <person name="Pain A."/>
            <person name="Berriman M."/>
            <person name="Janse C.J."/>
        </authorList>
    </citation>
    <scope>NUCLEOTIDE SEQUENCE [LARGE SCALE GENOMIC DNA]</scope>
    <source>
        <strain evidence="4">ANKA</strain>
    </source>
</reference>
<comment type="function">
    <text evidence="1">Component of the spliceosomal U1 snRNP, which is essential for recognition of the pre-mRNA 5' splice-site and the subsequent assembly of the spliceosome. U1-C is directly involved in initial 5' splice-site recognition for both constitutive and regulated alternative splicing. The interaction with the 5' splice-site seems to precede base-pairing between the pre-mRNA and the U1 snRNA. Stimulates commitment or early (E) complex formation by stabilizing the base pairing of the 5' end of the U1 snRNA and the 5' splice-site region.</text>
</comment>
<comment type="subunit">
    <text evidence="1">U1 snRNP is composed of the 7 core Sm proteins B/B', D1, D2, D3, E, F and G that assemble in a heptameric protein ring on the Sm site of the small nuclear RNA to form the core snRNP, and at least 3 U1 snRNP-specific proteins U1-70K, U1-A and U1-C. U1-C interacts with U1 snRNA and the 5' splice-site region of the pre-mRNA.</text>
</comment>
<comment type="subcellular location">
    <subcellularLocation>
        <location evidence="1">Nucleus</location>
    </subcellularLocation>
</comment>
<comment type="similarity">
    <text evidence="1">Belongs to the U1 small nuclear ribonucleoprotein C family.</text>
</comment>
<sequence length="197" mass="23283">MPKYYCEYCDIYLTHSSPVGRRQHNQGRKHISAKIEYFQNLLREEGITPQNFLGFLGNQGYNNTLANPMMNNFMPGNYNAYMKYNPMRNYHHSNRNSNYQHSIGMHNNKYSRAGYVPPGSNKYPNNHFHNNKRINNIPKPYNNYTNKPITNSSYKNDKQDYRNNNESNDNMNSNNFSNYQVNKENANFVNKNNEQPN</sequence>
<organism>
    <name type="scientific">Plasmodium berghei (strain Anka)</name>
    <dbReference type="NCBI Taxonomy" id="5823"/>
    <lineage>
        <taxon>Eukaryota</taxon>
        <taxon>Sar</taxon>
        <taxon>Alveolata</taxon>
        <taxon>Apicomplexa</taxon>
        <taxon>Aconoidasida</taxon>
        <taxon>Haemosporida</taxon>
        <taxon>Plasmodiidae</taxon>
        <taxon>Plasmodium</taxon>
        <taxon>Plasmodium (Vinckeia)</taxon>
    </lineage>
</organism>
<gene>
    <name type="primary">SNRPC</name>
    <name type="ORF">PB001431.02.0</name>
    <name evidence="3" type="ORF">PBANKA_1424800</name>
</gene>
<protein>
    <recommendedName>
        <fullName evidence="1">U1 small nuclear ribonucleoprotein C</fullName>
        <shortName evidence="1">U1 snRNP C</shortName>
        <shortName evidence="1">U1-C</shortName>
        <shortName evidence="1">U1C</shortName>
    </recommendedName>
</protein>
<feature type="chain" id="PRO_0000414273" description="U1 small nuclear ribonucleoprotein C">
    <location>
        <begin position="1"/>
        <end position="197"/>
    </location>
</feature>
<feature type="zinc finger region" description="Matrin-type" evidence="1">
    <location>
        <begin position="4"/>
        <end position="36"/>
    </location>
</feature>
<feature type="region of interest" description="Disordered" evidence="2">
    <location>
        <begin position="128"/>
        <end position="178"/>
    </location>
</feature>
<feature type="compositionally biased region" description="Low complexity" evidence="2">
    <location>
        <begin position="128"/>
        <end position="137"/>
    </location>
</feature>
<feature type="compositionally biased region" description="Polar residues" evidence="2">
    <location>
        <begin position="142"/>
        <end position="154"/>
    </location>
</feature>
<feature type="compositionally biased region" description="Low complexity" evidence="2">
    <location>
        <begin position="164"/>
        <end position="178"/>
    </location>
</feature>
<proteinExistence type="inferred from homology"/>